<protein>
    <recommendedName>
        <fullName evidence="1">Small ribosomal subunit protein bS18</fullName>
    </recommendedName>
    <alternativeName>
        <fullName evidence="2">30S ribosomal protein S18</fullName>
    </alternativeName>
</protein>
<accession>Q0T9J1</accession>
<gene>
    <name evidence="1" type="primary">rpsR</name>
    <name type="ordered locus">ECP_4447</name>
</gene>
<evidence type="ECO:0000255" key="1">
    <source>
        <dbReference type="HAMAP-Rule" id="MF_00270"/>
    </source>
</evidence>
<evidence type="ECO:0000305" key="2"/>
<reference key="1">
    <citation type="journal article" date="2006" name="Mol. Microbiol.">
        <title>Role of pathogenicity island-associated integrases in the genome plasticity of uropathogenic Escherichia coli strain 536.</title>
        <authorList>
            <person name="Hochhut B."/>
            <person name="Wilde C."/>
            <person name="Balling G."/>
            <person name="Middendorf B."/>
            <person name="Dobrindt U."/>
            <person name="Brzuszkiewicz E."/>
            <person name="Gottschalk G."/>
            <person name="Carniel E."/>
            <person name="Hacker J."/>
        </authorList>
    </citation>
    <scope>NUCLEOTIDE SEQUENCE [LARGE SCALE GENOMIC DNA]</scope>
    <source>
        <strain>536 / UPEC</strain>
    </source>
</reference>
<organism>
    <name type="scientific">Escherichia coli O6:K15:H31 (strain 536 / UPEC)</name>
    <dbReference type="NCBI Taxonomy" id="362663"/>
    <lineage>
        <taxon>Bacteria</taxon>
        <taxon>Pseudomonadati</taxon>
        <taxon>Pseudomonadota</taxon>
        <taxon>Gammaproteobacteria</taxon>
        <taxon>Enterobacterales</taxon>
        <taxon>Enterobacteriaceae</taxon>
        <taxon>Escherichia</taxon>
    </lineage>
</organism>
<sequence>MARYFRRRKFCRFTAEGVQEIDYKDIATLKNYITESGKIVPSRITGTRAKYQRQLARAIKRARYLSLLPYTDRHQ</sequence>
<keyword id="KW-0687">Ribonucleoprotein</keyword>
<keyword id="KW-0689">Ribosomal protein</keyword>
<keyword id="KW-0694">RNA-binding</keyword>
<keyword id="KW-0699">rRNA-binding</keyword>
<feature type="chain" id="PRO_1000003496" description="Small ribosomal subunit protein bS18">
    <location>
        <begin position="1"/>
        <end position="75"/>
    </location>
</feature>
<dbReference type="EMBL" id="CP000247">
    <property type="protein sequence ID" value="ABG72388.1"/>
    <property type="molecule type" value="Genomic_DNA"/>
</dbReference>
<dbReference type="RefSeq" id="WP_000135199.1">
    <property type="nucleotide sequence ID" value="NC_008253.1"/>
</dbReference>
<dbReference type="SMR" id="Q0T9J1"/>
<dbReference type="GeneID" id="98186237"/>
<dbReference type="KEGG" id="ecp:ECP_4447"/>
<dbReference type="HOGENOM" id="CLU_148710_2_3_6"/>
<dbReference type="Proteomes" id="UP000009182">
    <property type="component" value="Chromosome"/>
</dbReference>
<dbReference type="GO" id="GO:0022627">
    <property type="term" value="C:cytosolic small ribosomal subunit"/>
    <property type="evidence" value="ECO:0007669"/>
    <property type="project" value="TreeGrafter"/>
</dbReference>
<dbReference type="GO" id="GO:0070181">
    <property type="term" value="F:small ribosomal subunit rRNA binding"/>
    <property type="evidence" value="ECO:0007669"/>
    <property type="project" value="TreeGrafter"/>
</dbReference>
<dbReference type="GO" id="GO:0003735">
    <property type="term" value="F:structural constituent of ribosome"/>
    <property type="evidence" value="ECO:0007669"/>
    <property type="project" value="InterPro"/>
</dbReference>
<dbReference type="GO" id="GO:0006412">
    <property type="term" value="P:translation"/>
    <property type="evidence" value="ECO:0007669"/>
    <property type="project" value="UniProtKB-UniRule"/>
</dbReference>
<dbReference type="FunFam" id="4.10.640.10:FF:000001">
    <property type="entry name" value="30S ribosomal protein S18"/>
    <property type="match status" value="1"/>
</dbReference>
<dbReference type="Gene3D" id="4.10.640.10">
    <property type="entry name" value="Ribosomal protein S18"/>
    <property type="match status" value="1"/>
</dbReference>
<dbReference type="HAMAP" id="MF_00270">
    <property type="entry name" value="Ribosomal_bS18"/>
    <property type="match status" value="1"/>
</dbReference>
<dbReference type="InterPro" id="IPR001648">
    <property type="entry name" value="Ribosomal_bS18"/>
</dbReference>
<dbReference type="InterPro" id="IPR018275">
    <property type="entry name" value="Ribosomal_bS18_CS"/>
</dbReference>
<dbReference type="InterPro" id="IPR036870">
    <property type="entry name" value="Ribosomal_bS18_sf"/>
</dbReference>
<dbReference type="NCBIfam" id="TIGR00165">
    <property type="entry name" value="S18"/>
    <property type="match status" value="1"/>
</dbReference>
<dbReference type="PANTHER" id="PTHR13479">
    <property type="entry name" value="30S RIBOSOMAL PROTEIN S18"/>
    <property type="match status" value="1"/>
</dbReference>
<dbReference type="PANTHER" id="PTHR13479:SF40">
    <property type="entry name" value="SMALL RIBOSOMAL SUBUNIT PROTEIN BS18M"/>
    <property type="match status" value="1"/>
</dbReference>
<dbReference type="Pfam" id="PF01084">
    <property type="entry name" value="Ribosomal_S18"/>
    <property type="match status" value="1"/>
</dbReference>
<dbReference type="PRINTS" id="PR00974">
    <property type="entry name" value="RIBOSOMALS18"/>
</dbReference>
<dbReference type="SUPFAM" id="SSF46911">
    <property type="entry name" value="Ribosomal protein S18"/>
    <property type="match status" value="1"/>
</dbReference>
<dbReference type="PROSITE" id="PS00057">
    <property type="entry name" value="RIBOSOMAL_S18"/>
    <property type="match status" value="1"/>
</dbReference>
<proteinExistence type="inferred from homology"/>
<comment type="function">
    <text evidence="1">Binds as a heterodimer with protein bS6 to the central domain of the 16S rRNA, where it helps stabilize the platform of the 30S subunit.</text>
</comment>
<comment type="subunit">
    <text evidence="1">Part of the 30S ribosomal subunit. Forms a tight heterodimer with protein bS6.</text>
</comment>
<comment type="similarity">
    <text evidence="1">Belongs to the bacterial ribosomal protein bS18 family.</text>
</comment>
<name>RS18_ECOL5</name>